<dbReference type="EMBL" id="U90830">
    <property type="protein sequence ID" value="AAB71726.1"/>
    <property type="molecule type" value="Genomic_DNA"/>
</dbReference>
<dbReference type="PIR" id="T10267">
    <property type="entry name" value="T10267"/>
</dbReference>
<dbReference type="SMR" id="O01359"/>
<dbReference type="GO" id="GO:0022625">
    <property type="term" value="C:cytosolic large ribosomal subunit"/>
    <property type="evidence" value="ECO:0007669"/>
    <property type="project" value="TreeGrafter"/>
</dbReference>
<dbReference type="GO" id="GO:0030295">
    <property type="term" value="F:protein kinase activator activity"/>
    <property type="evidence" value="ECO:0007669"/>
    <property type="project" value="TreeGrafter"/>
</dbReference>
<dbReference type="GO" id="GO:0043021">
    <property type="term" value="F:ribonucleoprotein complex binding"/>
    <property type="evidence" value="ECO:0007669"/>
    <property type="project" value="TreeGrafter"/>
</dbReference>
<dbReference type="GO" id="GO:0003735">
    <property type="term" value="F:structural constituent of ribosome"/>
    <property type="evidence" value="ECO:0007669"/>
    <property type="project" value="InterPro"/>
</dbReference>
<dbReference type="GO" id="GO:0002181">
    <property type="term" value="P:cytoplasmic translation"/>
    <property type="evidence" value="ECO:0007669"/>
    <property type="project" value="TreeGrafter"/>
</dbReference>
<dbReference type="GO" id="GO:0006414">
    <property type="term" value="P:translational elongation"/>
    <property type="evidence" value="ECO:0007669"/>
    <property type="project" value="InterPro"/>
</dbReference>
<dbReference type="CDD" id="cd05831">
    <property type="entry name" value="Ribosomal_P1"/>
    <property type="match status" value="1"/>
</dbReference>
<dbReference type="FunFam" id="1.10.10.1410:FF:000001">
    <property type="entry name" value="60S acidic ribosomal protein P1"/>
    <property type="match status" value="1"/>
</dbReference>
<dbReference type="Gene3D" id="1.10.10.1410">
    <property type="match status" value="1"/>
</dbReference>
<dbReference type="HAMAP" id="MF_01478">
    <property type="entry name" value="Ribosomal_L12_arch"/>
    <property type="match status" value="1"/>
</dbReference>
<dbReference type="InterPro" id="IPR038716">
    <property type="entry name" value="P1/P2_N_sf"/>
</dbReference>
<dbReference type="InterPro" id="IPR027534">
    <property type="entry name" value="Ribosomal_P1/P2"/>
</dbReference>
<dbReference type="PANTHER" id="PTHR45696">
    <property type="entry name" value="60S ACIDIC RIBOSOMAL PROTEIN P1"/>
    <property type="match status" value="1"/>
</dbReference>
<dbReference type="PANTHER" id="PTHR45696:SF10">
    <property type="entry name" value="LARGE RIBOSOMAL SUBUNIT PROTEIN P1"/>
    <property type="match status" value="1"/>
</dbReference>
<dbReference type="Pfam" id="PF00428">
    <property type="entry name" value="Ribosomal_60s"/>
    <property type="match status" value="1"/>
</dbReference>
<sequence length="112" mass="11247">MASPQELACVYAALILQDDEVAITGDKIATLLKAANIEFEPFWPGLFAKALEGVDVKNLITSVSSGASAGPAQAAAAAPAGGAPAAAAPAESKEGRRSQGESDDDMGFGLLD</sequence>
<proteinExistence type="inferred from homology"/>
<accession>O01359</accession>
<protein>
    <recommendedName>
        <fullName evidence="3">Large ribosomal subunit protein P1</fullName>
    </recommendedName>
    <alternativeName>
        <fullName>60S acidic ribosomal protein P1</fullName>
    </alternativeName>
    <alternativeName>
        <fullName>Ribosomal protein RPL-21</fullName>
    </alternativeName>
</protein>
<keyword id="KW-0687">Ribonucleoprotein</keyword>
<keyword id="KW-0689">Ribosomal protein</keyword>
<gene>
    <name type="primary">rpl-21</name>
</gene>
<feature type="chain" id="PRO_0000157694" description="Large ribosomal subunit protein P1">
    <location>
        <begin position="1"/>
        <end position="112"/>
    </location>
</feature>
<feature type="region of interest" description="Disordered" evidence="2">
    <location>
        <begin position="71"/>
        <end position="112"/>
    </location>
</feature>
<feature type="compositionally biased region" description="Low complexity" evidence="2">
    <location>
        <begin position="71"/>
        <end position="90"/>
    </location>
</feature>
<feature type="compositionally biased region" description="Basic and acidic residues" evidence="2">
    <location>
        <begin position="91"/>
        <end position="100"/>
    </location>
</feature>
<name>RLA1_OSCTI</name>
<reference key="1">
    <citation type="journal article" date="1997" name="Proc. Natl. Acad. Sci. U.S.A.">
        <title>Operons and SL2 trans-splicing exist in nematodes outside the genus Caenorhabditis.</title>
        <authorList>
            <person name="Evans D."/>
            <person name="Zorio D.A.R."/>
            <person name="Macmorris M."/>
            <person name="Winter C.E."/>
            <person name="Lea K."/>
            <person name="Blumenthal T."/>
        </authorList>
    </citation>
    <scope>NUCLEOTIDE SEQUENCE [GENOMIC DNA]</scope>
    <source>
        <strain>CEW1</strain>
    </source>
</reference>
<comment type="function">
    <text>Plays an important role in the elongation step of protein synthesis.</text>
</comment>
<comment type="subunit">
    <text evidence="1">P1 and P2 exist as dimers at the large ribosomal subunit.</text>
</comment>
<comment type="similarity">
    <text evidence="3">Belongs to the eukaryotic ribosomal protein P1/P2 family.</text>
</comment>
<organism>
    <name type="scientific">Oscheius tipulae</name>
    <dbReference type="NCBI Taxonomy" id="141969"/>
    <lineage>
        <taxon>Eukaryota</taxon>
        <taxon>Metazoa</taxon>
        <taxon>Ecdysozoa</taxon>
        <taxon>Nematoda</taxon>
        <taxon>Chromadorea</taxon>
        <taxon>Rhabditida</taxon>
        <taxon>Rhabditina</taxon>
        <taxon>Rhabditomorpha</taxon>
        <taxon>Rhabditoidea</taxon>
        <taxon>Rhabditidae</taxon>
        <taxon>Rhabditinae</taxon>
        <taxon>Oscheius</taxon>
    </lineage>
</organism>
<evidence type="ECO:0000250" key="1"/>
<evidence type="ECO:0000256" key="2">
    <source>
        <dbReference type="SAM" id="MobiDB-lite"/>
    </source>
</evidence>
<evidence type="ECO:0000305" key="3"/>